<reference key="1">
    <citation type="journal article" date="2000" name="Plant Cell">
        <title>A new family of high-affinity transporters for adenine, cytosine, and purine derivatives in Arabidopsis.</title>
        <authorList>
            <person name="Gillissen B."/>
            <person name="Buerkle L."/>
            <person name="Andre B."/>
            <person name="Kuehn C."/>
            <person name="Rentsch D."/>
            <person name="Brandl B."/>
            <person name="Frommer W.B."/>
        </authorList>
    </citation>
    <scope>NUCLEOTIDE SEQUENCE [MRNA]</scope>
    <scope>GENE FAMILY</scope>
    <scope>NOMENCLATURE</scope>
</reference>
<reference key="2">
    <citation type="journal article" date="1999" name="Nature">
        <title>Sequence and analysis of chromosome 2 of the plant Arabidopsis thaliana.</title>
        <authorList>
            <person name="Lin X."/>
            <person name="Kaul S."/>
            <person name="Rounsley S.D."/>
            <person name="Shea T.P."/>
            <person name="Benito M.-I."/>
            <person name="Town C.D."/>
            <person name="Fujii C.Y."/>
            <person name="Mason T.M."/>
            <person name="Bowman C.L."/>
            <person name="Barnstead M.E."/>
            <person name="Feldblyum T.V."/>
            <person name="Buell C.R."/>
            <person name="Ketchum K.A."/>
            <person name="Lee J.J."/>
            <person name="Ronning C.M."/>
            <person name="Koo H.L."/>
            <person name="Moffat K.S."/>
            <person name="Cronin L.A."/>
            <person name="Shen M."/>
            <person name="Pai G."/>
            <person name="Van Aken S."/>
            <person name="Umayam L."/>
            <person name="Tallon L.J."/>
            <person name="Gill J.E."/>
            <person name="Adams M.D."/>
            <person name="Carrera A.J."/>
            <person name="Creasy T.H."/>
            <person name="Goodman H.M."/>
            <person name="Somerville C.R."/>
            <person name="Copenhaver G.P."/>
            <person name="Preuss D."/>
            <person name="Nierman W.C."/>
            <person name="White O."/>
            <person name="Eisen J.A."/>
            <person name="Salzberg S.L."/>
            <person name="Fraser C.M."/>
            <person name="Venter J.C."/>
        </authorList>
    </citation>
    <scope>NUCLEOTIDE SEQUENCE [LARGE SCALE GENOMIC DNA]</scope>
    <source>
        <strain>cv. Columbia</strain>
    </source>
</reference>
<reference key="3">
    <citation type="journal article" date="2017" name="Plant J.">
        <title>Araport11: a complete reannotation of the Arabidopsis thaliana reference genome.</title>
        <authorList>
            <person name="Cheng C.Y."/>
            <person name="Krishnakumar V."/>
            <person name="Chan A.P."/>
            <person name="Thibaud-Nissen F."/>
            <person name="Schobel S."/>
            <person name="Town C.D."/>
        </authorList>
    </citation>
    <scope>GENOME REANNOTATION</scope>
    <source>
        <strain>cv. Columbia</strain>
    </source>
</reference>
<reference key="4">
    <citation type="journal article" date="2003" name="Plant J.">
        <title>Transport of cytokinins mediated by purine transporters of the PUP family expressed in phloem, hydathodes, and pollen of Arabidopsis.</title>
        <authorList>
            <person name="Buerkle L."/>
            <person name="Cedzich A."/>
            <person name="Doepke C."/>
            <person name="Stransky H."/>
            <person name="Okumoto S."/>
            <person name="Gillissen B."/>
            <person name="Kuehn C."/>
            <person name="Frommer W.B."/>
        </authorList>
    </citation>
    <scope>FUNCTION</scope>
    <scope>BIOPHYSICOCHEMICAL PROPERTIES</scope>
    <scope>ACTIVITY REGULATION</scope>
    <scope>TISSUE SPECIFICITY</scope>
    <scope>GENE FAMILY</scope>
    <scope>NOMENCLATURE</scope>
</reference>
<evidence type="ECO:0000255" key="1"/>
<evidence type="ECO:0000269" key="2">
    <source>
    </source>
</evidence>
<evidence type="ECO:0000305" key="3"/>
<accession>Q94GB1</accession>
<accession>P93010</accession>
<accession>Q3EBN9</accession>
<proteinExistence type="evidence at protein level"/>
<comment type="function">
    <text evidence="2">Mediates adenine transport. May be involved in the uptake of cytokinin analogs.</text>
</comment>
<comment type="activity regulation">
    <text evidence="2">Competitive inhibition of adenine transport by isopentenyladenine, kinetin, benzylaminopurine, trans- and cis-zeatin and trans-zeatin riboside.</text>
</comment>
<comment type="biophysicochemical properties">
    <kinetics>
        <KM evidence="2">22.6 uM for adenine (at pH 3.5)</KM>
    </kinetics>
    <phDependence>
        <text evidence="2">Optimum pH is 3.0.</text>
    </phDependence>
</comment>
<comment type="subcellular location">
    <subcellularLocation>
        <location evidence="3">Membrane</location>
        <topology evidence="3">Multi-pass membrane protein</topology>
    </subcellularLocation>
</comment>
<comment type="alternative products">
    <event type="alternative splicing"/>
    <isoform>
        <id>Q94GB1-1</id>
        <name>1</name>
        <sequence type="displayed"/>
    </isoform>
    <isoform>
        <id>Q94GB1-2</id>
        <name>2</name>
        <sequence type="described" ref="VSP_030944"/>
    </isoform>
</comment>
<comment type="tissue specificity">
    <text evidence="2">Expressed in the vascular system of leaves. Restricted to the phloem. Expressed in flowers and roots and not detected in stems.</text>
</comment>
<comment type="similarity">
    <text evidence="3">Belongs to the purine permeases (TC 2.A.7.14) family.</text>
</comment>
<comment type="sequence caution" evidence="3">
    <conflict type="erroneous initiation">
        <sequence resource="EMBL-CDS" id="AAC69140"/>
    </conflict>
</comment>
<protein>
    <recommendedName>
        <fullName>Purine permease 2</fullName>
        <shortName>AtPUP2</shortName>
    </recommendedName>
</protein>
<dbReference type="EMBL" id="AF078532">
    <property type="protein sequence ID" value="AAK61813.1"/>
    <property type="molecule type" value="mRNA"/>
</dbReference>
<dbReference type="EMBL" id="U78721">
    <property type="protein sequence ID" value="AAC69140.1"/>
    <property type="status" value="ALT_INIT"/>
    <property type="molecule type" value="Genomic_DNA"/>
</dbReference>
<dbReference type="EMBL" id="CP002685">
    <property type="protein sequence ID" value="AEC08879.1"/>
    <property type="molecule type" value="Genomic_DNA"/>
</dbReference>
<dbReference type="EMBL" id="CP002685">
    <property type="protein sequence ID" value="AEC08880.1"/>
    <property type="molecule type" value="Genomic_DNA"/>
</dbReference>
<dbReference type="PIR" id="B84749">
    <property type="entry name" value="B84749"/>
</dbReference>
<dbReference type="RefSeq" id="NP_180931.2">
    <molecule id="Q94GB1-1"/>
    <property type="nucleotide sequence ID" value="NM_128934.3"/>
</dbReference>
<dbReference type="RefSeq" id="NP_973592.1">
    <molecule id="Q94GB1-2"/>
    <property type="nucleotide sequence ID" value="NM_201863.2"/>
</dbReference>
<dbReference type="STRING" id="3702.Q94GB1"/>
<dbReference type="TCDB" id="2.A.7.14.4">
    <property type="family name" value="the drug/metabolite transporter (dmt) superfamily"/>
</dbReference>
<dbReference type="PaxDb" id="3702-AT2G33750.1"/>
<dbReference type="ProteomicsDB" id="226119">
    <molecule id="Q94GB1-1"/>
</dbReference>
<dbReference type="EnsemblPlants" id="AT2G33750.1">
    <molecule id="Q94GB1-1"/>
    <property type="protein sequence ID" value="AT2G33750.1"/>
    <property type="gene ID" value="AT2G33750"/>
</dbReference>
<dbReference type="EnsemblPlants" id="AT2G33750.2">
    <molecule id="Q94GB1-2"/>
    <property type="protein sequence ID" value="AT2G33750.2"/>
    <property type="gene ID" value="AT2G33750"/>
</dbReference>
<dbReference type="GeneID" id="817941"/>
<dbReference type="Gramene" id="AT2G33750.1">
    <molecule id="Q94GB1-1"/>
    <property type="protein sequence ID" value="AT2G33750.1"/>
    <property type="gene ID" value="AT2G33750"/>
</dbReference>
<dbReference type="Gramene" id="AT2G33750.2">
    <molecule id="Q94GB1-2"/>
    <property type="protein sequence ID" value="AT2G33750.2"/>
    <property type="gene ID" value="AT2G33750"/>
</dbReference>
<dbReference type="KEGG" id="ath:AT2G33750"/>
<dbReference type="Araport" id="AT2G33750"/>
<dbReference type="TAIR" id="AT2G33750">
    <property type="gene designation" value="PUP2"/>
</dbReference>
<dbReference type="eggNOG" id="ENOG502QTN9">
    <property type="taxonomic scope" value="Eukaryota"/>
</dbReference>
<dbReference type="InParanoid" id="Q94GB1"/>
<dbReference type="OMA" id="WNEARAK"/>
<dbReference type="OrthoDB" id="1865379at2759"/>
<dbReference type="PhylomeDB" id="Q94GB1"/>
<dbReference type="BioCyc" id="MetaCyc:MONOMER-14778"/>
<dbReference type="SABIO-RK" id="Q94GB1"/>
<dbReference type="PRO" id="PR:Q94GB1"/>
<dbReference type="Proteomes" id="UP000006548">
    <property type="component" value="Chromosome 2"/>
</dbReference>
<dbReference type="ExpressionAtlas" id="Q94GB1">
    <property type="expression patterns" value="baseline and differential"/>
</dbReference>
<dbReference type="GO" id="GO:0016020">
    <property type="term" value="C:membrane"/>
    <property type="evidence" value="ECO:0000304"/>
    <property type="project" value="TAIR"/>
</dbReference>
<dbReference type="GO" id="GO:0005345">
    <property type="term" value="F:purine nucleobase transmembrane transporter activity"/>
    <property type="evidence" value="ECO:0000304"/>
    <property type="project" value="TAIR"/>
</dbReference>
<dbReference type="GO" id="GO:0015211">
    <property type="term" value="F:purine nucleoside transmembrane transporter activity"/>
    <property type="evidence" value="ECO:0007669"/>
    <property type="project" value="InterPro"/>
</dbReference>
<dbReference type="GO" id="GO:0006863">
    <property type="term" value="P:purine nucleobase transport"/>
    <property type="evidence" value="ECO:0000304"/>
    <property type="project" value="TAIR"/>
</dbReference>
<dbReference type="Gene3D" id="1.10.3730.20">
    <property type="match status" value="1"/>
</dbReference>
<dbReference type="InterPro" id="IPR030182">
    <property type="entry name" value="PUP_plant"/>
</dbReference>
<dbReference type="PANTHER" id="PTHR31376">
    <property type="entry name" value="OS09G0467300 PROTEIN-RELATED"/>
    <property type="match status" value="1"/>
</dbReference>
<dbReference type="PANTHER" id="PTHR31376:SF1">
    <property type="entry name" value="PURINE PERMEASE 2"/>
    <property type="match status" value="1"/>
</dbReference>
<dbReference type="Pfam" id="PF16913">
    <property type="entry name" value="PUNUT"/>
    <property type="match status" value="1"/>
</dbReference>
<dbReference type="SUPFAM" id="SSF103481">
    <property type="entry name" value="Multidrug resistance efflux transporter EmrE"/>
    <property type="match status" value="1"/>
</dbReference>
<feature type="chain" id="PRO_0000317389" description="Purine permease 2">
    <location>
        <begin position="1"/>
        <end position="358"/>
    </location>
</feature>
<feature type="transmembrane region" description="Helical" evidence="1">
    <location>
        <begin position="6"/>
        <end position="26"/>
    </location>
</feature>
<feature type="transmembrane region" description="Helical" evidence="1">
    <location>
        <begin position="37"/>
        <end position="57"/>
    </location>
</feature>
<feature type="transmembrane region" description="Helical" evidence="1">
    <location>
        <begin position="74"/>
        <end position="94"/>
    </location>
</feature>
<feature type="transmembrane region" description="Helical" evidence="1">
    <location>
        <begin position="110"/>
        <end position="130"/>
    </location>
</feature>
<feature type="transmembrane region" description="Helical" evidence="1">
    <location>
        <begin position="134"/>
        <end position="154"/>
    </location>
</feature>
<feature type="transmembrane region" description="Helical" evidence="1">
    <location>
        <begin position="170"/>
        <end position="190"/>
    </location>
</feature>
<feature type="transmembrane region" description="Helical" evidence="1">
    <location>
        <begin position="209"/>
        <end position="229"/>
    </location>
</feature>
<feature type="transmembrane region" description="Helical" evidence="1">
    <location>
        <begin position="262"/>
        <end position="282"/>
    </location>
</feature>
<feature type="transmembrane region" description="Helical" evidence="1">
    <location>
        <begin position="288"/>
        <end position="308"/>
    </location>
</feature>
<feature type="transmembrane region" description="Helical" evidence="1">
    <location>
        <begin position="312"/>
        <end position="332"/>
    </location>
</feature>
<feature type="domain" description="EamA">
    <location>
        <begin position="46"/>
        <end position="154"/>
    </location>
</feature>
<feature type="splice variant" id="VSP_030944" description="In isoform 2." evidence="3">
    <location>
        <begin position="233"/>
        <end position="243"/>
    </location>
</feature>
<gene>
    <name type="primary">PUP2</name>
    <name type="ordered locus">At2g33750</name>
    <name type="ORF">T1B8.6</name>
</gene>
<sequence length="358" mass="39461">MKMKTVLVIINCIFLAIGNCGGPLMMRLYFQNGGERIWFPSFLQTVGCPLIFFPLLLSFLRRRRCLEEQETTPFFLMKPPLFIAAIVVGLLVGFDNYLYSYGLAYIPVSTASLIISAQLGFTALFAFFMVKQKFTPFTINAIVLLTGGAVVLALNSDSDKLANETHKEYVVGFIMTLGAALLYGFILPLVELSYKKSGQRITYTLALEFQMVLCFAATCVCLVGMLAAGDFKVKHALFIFKNRVIAGEARDFKLGESLYYVVIVFTAIIWQAFFVGAIGLIFCASSLVSGIMVSALLPVTVILAVICFQEKFQAGKGVALALSLWGSVSYFYGQVKSEEKTKAQDTQLSQLPVTDYVA</sequence>
<organism>
    <name type="scientific">Arabidopsis thaliana</name>
    <name type="common">Mouse-ear cress</name>
    <dbReference type="NCBI Taxonomy" id="3702"/>
    <lineage>
        <taxon>Eukaryota</taxon>
        <taxon>Viridiplantae</taxon>
        <taxon>Streptophyta</taxon>
        <taxon>Embryophyta</taxon>
        <taxon>Tracheophyta</taxon>
        <taxon>Spermatophyta</taxon>
        <taxon>Magnoliopsida</taxon>
        <taxon>eudicotyledons</taxon>
        <taxon>Gunneridae</taxon>
        <taxon>Pentapetalae</taxon>
        <taxon>rosids</taxon>
        <taxon>malvids</taxon>
        <taxon>Brassicales</taxon>
        <taxon>Brassicaceae</taxon>
        <taxon>Camelineae</taxon>
        <taxon>Arabidopsis</taxon>
    </lineage>
</organism>
<keyword id="KW-0025">Alternative splicing</keyword>
<keyword id="KW-0472">Membrane</keyword>
<keyword id="KW-1185">Reference proteome</keyword>
<keyword id="KW-0812">Transmembrane</keyword>
<keyword id="KW-1133">Transmembrane helix</keyword>
<keyword id="KW-0813">Transport</keyword>
<name>PUP2_ARATH</name>